<name>TXC7B_CUPSA</name>
<evidence type="ECO:0000269" key="1">
    <source>
    </source>
</evidence>
<evidence type="ECO:0000303" key="2">
    <source>
    </source>
</evidence>
<evidence type="ECO:0000303" key="3">
    <source ref="2"/>
</evidence>
<evidence type="ECO:0000305" key="4"/>
<evidence type="ECO:0000305" key="5">
    <source>
    </source>
</evidence>
<protein>
    <recommendedName>
        <fullName evidence="3">Cupiennin-7b</fullName>
        <shortName evidence="3">Cu-7b</shortName>
    </recommendedName>
    <alternativeName>
        <fullName evidence="2">Short cationic peptide-5b</fullName>
        <shortName evidence="2">SCP-5b</shortName>
    </alternativeName>
</protein>
<organism>
    <name type="scientific">Cupiennius salei</name>
    <name type="common">American wandering spider</name>
    <dbReference type="NCBI Taxonomy" id="6928"/>
    <lineage>
        <taxon>Eukaryota</taxon>
        <taxon>Metazoa</taxon>
        <taxon>Ecdysozoa</taxon>
        <taxon>Arthropoda</taxon>
        <taxon>Chelicerata</taxon>
        <taxon>Arachnida</taxon>
        <taxon>Araneae</taxon>
        <taxon>Araneomorphae</taxon>
        <taxon>Entelegynae</taxon>
        <taxon>Lycosoidea</taxon>
        <taxon>Ctenidae</taxon>
        <taxon>Cupiennius</taxon>
    </lineage>
</organism>
<accession>B3EWW4</accession>
<comment type="subcellular location">
    <subcellularLocation>
        <location evidence="1">Secreted</location>
    </subcellularLocation>
</comment>
<comment type="tissue specificity">
    <text evidence="5">Expressed by the venom gland.</text>
</comment>
<comment type="mass spectrometry" mass="2043.202" method="Electrospray" evidence="1"/>
<comment type="similarity">
    <text evidence="4">Belongs to the cationic peptide 04 (cupiennin) family. 07 subfamily.</text>
</comment>
<keyword id="KW-0027">Amidation</keyword>
<keyword id="KW-0903">Direct protein sequencing</keyword>
<keyword id="KW-0964">Secreted</keyword>
<keyword id="KW-0800">Toxin</keyword>
<feature type="peptide" id="PRO_0000421223" description="Cupiennin-7b" evidence="1">
    <location>
        <begin position="1"/>
        <end position="17"/>
    </location>
</feature>
<feature type="modified residue" description="Threonine amide" evidence="1">
    <location>
        <position position="17"/>
    </location>
</feature>
<proteinExistence type="evidence at protein level"/>
<reference key="1">
    <citation type="journal article" date="2012" name="FEBS J.">
        <title>Multicomponent venom of the spider Cupiennius salei: a bioanalytical investigation applying different strategies.</title>
        <authorList>
            <person name="Trachsel C."/>
            <person name="Siegemund D."/>
            <person name="Kampfer U."/>
            <person name="Kopp L.S."/>
            <person name="Buhr C."/>
            <person name="Grossmann J."/>
            <person name="Luthi C."/>
            <person name="Cunningham M."/>
            <person name="Nentwig W."/>
            <person name="Kuhn-Nentwig L."/>
            <person name="Schurch S."/>
            <person name="Schaller J."/>
        </authorList>
    </citation>
    <scope>PROTEIN SEQUENCE</scope>
    <scope>MASS SPECTROMETRY</scope>
    <scope>AMIDATION AT THR-17</scope>
    <source>
        <tissue>Venom</tissue>
    </source>
</reference>
<reference key="2">
    <citation type="unpublished observations" date="2015-06">
        <authorList>
            <person name="Kuhn-Nentwig L."/>
            <person name="Gohel T."/>
        </authorList>
    </citation>
    <scope>NOMENCLATURE</scope>
</reference>
<sequence length="17" mass="2045">DLLTAIKRVKESMKRRT</sequence>
<dbReference type="GO" id="GO:0005576">
    <property type="term" value="C:extracellular region"/>
    <property type="evidence" value="ECO:0007669"/>
    <property type="project" value="UniProtKB-SubCell"/>
</dbReference>
<dbReference type="GO" id="GO:0090729">
    <property type="term" value="F:toxin activity"/>
    <property type="evidence" value="ECO:0007669"/>
    <property type="project" value="UniProtKB-KW"/>
</dbReference>